<sequence length="216" mass="24008">MKLNLVQIFFMLLMLLLGLGMGLGLGLHMATAVLEESDQPLNEFWSSDSQDKAEATEEGDGTQTTETLVLSNKEVVQPGWPEDPILGEDEVGGNKMLRASALFQSNKDYLRLDQTDRECNDMMAHKMKEPSQSCIAQYAFIHEDLNTVKAVCNSPVIACELKGGKCHKSSRPFDLTLCELSQPDQVTPNCNYLTSVIKKHIIITCNDMKRQLPTGQ</sequence>
<reference key="1">
    <citation type="journal article" date="2005" name="Genomics">
        <title>The ribonuclease A superfamily of mammals and birds: identifying new members and tracing evolutionary histories.</title>
        <authorList>
            <person name="Cho S."/>
            <person name="Beintema J.J."/>
            <person name="Zhang J."/>
        </authorList>
    </citation>
    <scope>NUCLEOTIDE SEQUENCE [MRNA] (ISOFORM 1)</scope>
</reference>
<reference key="2">
    <citation type="journal article" date="2004" name="Nat. Genet.">
        <title>Complete sequencing and characterization of 21,243 full-length human cDNAs.</title>
        <authorList>
            <person name="Ota T."/>
            <person name="Suzuki Y."/>
            <person name="Nishikawa T."/>
            <person name="Otsuki T."/>
            <person name="Sugiyama T."/>
            <person name="Irie R."/>
            <person name="Wakamatsu A."/>
            <person name="Hayashi K."/>
            <person name="Sato H."/>
            <person name="Nagai K."/>
            <person name="Kimura K."/>
            <person name="Makita H."/>
            <person name="Sekine M."/>
            <person name="Obayashi M."/>
            <person name="Nishi T."/>
            <person name="Shibahara T."/>
            <person name="Tanaka T."/>
            <person name="Ishii S."/>
            <person name="Yamamoto J."/>
            <person name="Saito K."/>
            <person name="Kawai Y."/>
            <person name="Isono Y."/>
            <person name="Nakamura Y."/>
            <person name="Nagahari K."/>
            <person name="Murakami K."/>
            <person name="Yasuda T."/>
            <person name="Iwayanagi T."/>
            <person name="Wagatsuma M."/>
            <person name="Shiratori A."/>
            <person name="Sudo H."/>
            <person name="Hosoiri T."/>
            <person name="Kaku Y."/>
            <person name="Kodaira H."/>
            <person name="Kondo H."/>
            <person name="Sugawara M."/>
            <person name="Takahashi M."/>
            <person name="Kanda K."/>
            <person name="Yokoi T."/>
            <person name="Furuya T."/>
            <person name="Kikkawa E."/>
            <person name="Omura Y."/>
            <person name="Abe K."/>
            <person name="Kamihara K."/>
            <person name="Katsuta N."/>
            <person name="Sato K."/>
            <person name="Tanikawa M."/>
            <person name="Yamazaki M."/>
            <person name="Ninomiya K."/>
            <person name="Ishibashi T."/>
            <person name="Yamashita H."/>
            <person name="Murakawa K."/>
            <person name="Fujimori K."/>
            <person name="Tanai H."/>
            <person name="Kimata M."/>
            <person name="Watanabe M."/>
            <person name="Hiraoka S."/>
            <person name="Chiba Y."/>
            <person name="Ishida S."/>
            <person name="Ono Y."/>
            <person name="Takiguchi S."/>
            <person name="Watanabe S."/>
            <person name="Yosida M."/>
            <person name="Hotuta T."/>
            <person name="Kusano J."/>
            <person name="Kanehori K."/>
            <person name="Takahashi-Fujii A."/>
            <person name="Hara H."/>
            <person name="Tanase T.-O."/>
            <person name="Nomura Y."/>
            <person name="Togiya S."/>
            <person name="Komai F."/>
            <person name="Hara R."/>
            <person name="Takeuchi K."/>
            <person name="Arita M."/>
            <person name="Imose N."/>
            <person name="Musashino K."/>
            <person name="Yuuki H."/>
            <person name="Oshima A."/>
            <person name="Sasaki N."/>
            <person name="Aotsuka S."/>
            <person name="Yoshikawa Y."/>
            <person name="Matsunawa H."/>
            <person name="Ichihara T."/>
            <person name="Shiohata N."/>
            <person name="Sano S."/>
            <person name="Moriya S."/>
            <person name="Momiyama H."/>
            <person name="Satoh N."/>
            <person name="Takami S."/>
            <person name="Terashima Y."/>
            <person name="Suzuki O."/>
            <person name="Nakagawa S."/>
            <person name="Senoh A."/>
            <person name="Mizoguchi H."/>
            <person name="Goto Y."/>
            <person name="Shimizu F."/>
            <person name="Wakebe H."/>
            <person name="Hishigaki H."/>
            <person name="Watanabe T."/>
            <person name="Sugiyama A."/>
            <person name="Takemoto M."/>
            <person name="Kawakami B."/>
            <person name="Yamazaki M."/>
            <person name="Watanabe K."/>
            <person name="Kumagai A."/>
            <person name="Itakura S."/>
            <person name="Fukuzumi Y."/>
            <person name="Fujimori Y."/>
            <person name="Komiyama M."/>
            <person name="Tashiro H."/>
            <person name="Tanigami A."/>
            <person name="Fujiwara T."/>
            <person name="Ono T."/>
            <person name="Yamada K."/>
            <person name="Fujii Y."/>
            <person name="Ozaki K."/>
            <person name="Hirao M."/>
            <person name="Ohmori Y."/>
            <person name="Kawabata A."/>
            <person name="Hikiji T."/>
            <person name="Kobatake N."/>
            <person name="Inagaki H."/>
            <person name="Ikema Y."/>
            <person name="Okamoto S."/>
            <person name="Okitani R."/>
            <person name="Kawakami T."/>
            <person name="Noguchi S."/>
            <person name="Itoh T."/>
            <person name="Shigeta K."/>
            <person name="Senba T."/>
            <person name="Matsumura K."/>
            <person name="Nakajima Y."/>
            <person name="Mizuno T."/>
            <person name="Morinaga M."/>
            <person name="Sasaki M."/>
            <person name="Togashi T."/>
            <person name="Oyama M."/>
            <person name="Hata H."/>
            <person name="Watanabe M."/>
            <person name="Komatsu T."/>
            <person name="Mizushima-Sugano J."/>
            <person name="Satoh T."/>
            <person name="Shirai Y."/>
            <person name="Takahashi Y."/>
            <person name="Nakagawa K."/>
            <person name="Okumura K."/>
            <person name="Nagase T."/>
            <person name="Nomura N."/>
            <person name="Kikuchi H."/>
            <person name="Masuho Y."/>
            <person name="Yamashita R."/>
            <person name="Nakai K."/>
            <person name="Yada T."/>
            <person name="Nakamura Y."/>
            <person name="Ohara O."/>
            <person name="Isogai T."/>
            <person name="Sugano S."/>
        </authorList>
    </citation>
    <scope>NUCLEOTIDE SEQUENCE [LARGE SCALE MRNA] (ISOFORM 2)</scope>
    <source>
        <tissue>Tongue</tissue>
    </source>
</reference>
<reference key="3">
    <citation type="journal article" date="2003" name="Nature">
        <title>The DNA sequence and analysis of human chromosome 14.</title>
        <authorList>
            <person name="Heilig R."/>
            <person name="Eckenberg R."/>
            <person name="Petit J.-L."/>
            <person name="Fonknechten N."/>
            <person name="Da Silva C."/>
            <person name="Cattolico L."/>
            <person name="Levy M."/>
            <person name="Barbe V."/>
            <person name="De Berardinis V."/>
            <person name="Ureta-Vidal A."/>
            <person name="Pelletier E."/>
            <person name="Vico V."/>
            <person name="Anthouard V."/>
            <person name="Rowen L."/>
            <person name="Madan A."/>
            <person name="Qin S."/>
            <person name="Sun H."/>
            <person name="Du H."/>
            <person name="Pepin K."/>
            <person name="Artiguenave F."/>
            <person name="Robert C."/>
            <person name="Cruaud C."/>
            <person name="Bruels T."/>
            <person name="Jaillon O."/>
            <person name="Friedlander L."/>
            <person name="Samson G."/>
            <person name="Brottier P."/>
            <person name="Cure S."/>
            <person name="Segurens B."/>
            <person name="Aniere F."/>
            <person name="Samain S."/>
            <person name="Crespeau H."/>
            <person name="Abbasi N."/>
            <person name="Aiach N."/>
            <person name="Boscus D."/>
            <person name="Dickhoff R."/>
            <person name="Dors M."/>
            <person name="Dubois I."/>
            <person name="Friedman C."/>
            <person name="Gouyvenoux M."/>
            <person name="James R."/>
            <person name="Madan A."/>
            <person name="Mairey-Estrada B."/>
            <person name="Mangenot S."/>
            <person name="Martins N."/>
            <person name="Menard M."/>
            <person name="Oztas S."/>
            <person name="Ratcliffe A."/>
            <person name="Shaffer T."/>
            <person name="Trask B."/>
            <person name="Vacherie B."/>
            <person name="Bellemere C."/>
            <person name="Belser C."/>
            <person name="Besnard-Gonnet M."/>
            <person name="Bartol-Mavel D."/>
            <person name="Boutard M."/>
            <person name="Briez-Silla S."/>
            <person name="Combette S."/>
            <person name="Dufosse-Laurent V."/>
            <person name="Ferron C."/>
            <person name="Lechaplais C."/>
            <person name="Louesse C."/>
            <person name="Muselet D."/>
            <person name="Magdelenat G."/>
            <person name="Pateau E."/>
            <person name="Petit E."/>
            <person name="Sirvain-Trukniewicz P."/>
            <person name="Trybou A."/>
            <person name="Vega-Czarny N."/>
            <person name="Bataille E."/>
            <person name="Bluet E."/>
            <person name="Bordelais I."/>
            <person name="Dubois M."/>
            <person name="Dumont C."/>
            <person name="Guerin T."/>
            <person name="Haffray S."/>
            <person name="Hammadi R."/>
            <person name="Muanga J."/>
            <person name="Pellouin V."/>
            <person name="Robert D."/>
            <person name="Wunderle E."/>
            <person name="Gauguet G."/>
            <person name="Roy A."/>
            <person name="Sainte-Marthe L."/>
            <person name="Verdier J."/>
            <person name="Verdier-Discala C."/>
            <person name="Hillier L.W."/>
            <person name="Fulton L."/>
            <person name="McPherson J."/>
            <person name="Matsuda F."/>
            <person name="Wilson R."/>
            <person name="Scarpelli C."/>
            <person name="Gyapay G."/>
            <person name="Wincker P."/>
            <person name="Saurin W."/>
            <person name="Quetier F."/>
            <person name="Waterston R."/>
            <person name="Hood L."/>
            <person name="Weissenbach J."/>
        </authorList>
    </citation>
    <scope>NUCLEOTIDE SEQUENCE [LARGE SCALE GENOMIC DNA]</scope>
</reference>
<reference key="4">
    <citation type="submission" date="2005-09" db="EMBL/GenBank/DDBJ databases">
        <authorList>
            <person name="Mural R.J."/>
            <person name="Istrail S."/>
            <person name="Sutton G.G."/>
            <person name="Florea L."/>
            <person name="Halpern A.L."/>
            <person name="Mobarry C.M."/>
            <person name="Lippert R."/>
            <person name="Walenz B."/>
            <person name="Shatkay H."/>
            <person name="Dew I."/>
            <person name="Miller J.R."/>
            <person name="Flanigan M.J."/>
            <person name="Edwards N.J."/>
            <person name="Bolanos R."/>
            <person name="Fasulo D."/>
            <person name="Halldorsson B.V."/>
            <person name="Hannenhalli S."/>
            <person name="Turner R."/>
            <person name="Yooseph S."/>
            <person name="Lu F."/>
            <person name="Nusskern D.R."/>
            <person name="Shue B.C."/>
            <person name="Zheng X.H."/>
            <person name="Zhong F."/>
            <person name="Delcher A.L."/>
            <person name="Huson D.H."/>
            <person name="Kravitz S.A."/>
            <person name="Mouchard L."/>
            <person name="Reinert K."/>
            <person name="Remington K.A."/>
            <person name="Clark A.G."/>
            <person name="Waterman M.S."/>
            <person name="Eichler E.E."/>
            <person name="Adams M.D."/>
            <person name="Hunkapiller M.W."/>
            <person name="Myers E.W."/>
            <person name="Venter J.C."/>
        </authorList>
    </citation>
    <scope>NUCLEOTIDE SEQUENCE [LARGE SCALE GENOMIC DNA]</scope>
</reference>
<reference key="5">
    <citation type="journal article" date="2004" name="Genome Res.">
        <title>The status, quality, and expansion of the NIH full-length cDNA project: the Mammalian Gene Collection (MGC).</title>
        <authorList>
            <consortium name="The MGC Project Team"/>
        </authorList>
    </citation>
    <scope>NUCLEOTIDE SEQUENCE [LARGE SCALE MRNA] (ISOFORM 1)</scope>
</reference>
<feature type="signal peptide" evidence="2">
    <location>
        <begin position="1"/>
        <end position="26"/>
    </location>
</feature>
<feature type="chain" id="PRO_0000045963" description="Inactive ribonuclease-like protein 10">
    <location>
        <begin position="27"/>
        <end position="216"/>
    </location>
</feature>
<feature type="region of interest" description="Disordered" evidence="3">
    <location>
        <begin position="43"/>
        <end position="65"/>
    </location>
</feature>
<feature type="splice variant" id="VSP_053579" description="In isoform 2." evidence="4">
    <original>M</original>
    <variation>MWGAPLPRRPVWDVRSASAGPQPCLGGKM</variation>
    <location>
        <position position="1"/>
    </location>
</feature>
<feature type="sequence variant" id="VAR_052198" description="In dbSNP:rs2067648.">
    <original>S</original>
    <variation>N</variation>
    <location>
        <position position="131"/>
    </location>
</feature>
<gene>
    <name type="primary">RNASE10</name>
</gene>
<protein>
    <recommendedName>
        <fullName>Inactive ribonuclease-like protein 10</fullName>
    </recommendedName>
</protein>
<comment type="function">
    <text evidence="1">Secreted proximal epididymal protein required for post-testicular sperm maturation and male fertility. May be involved in sperm adhesion to the egg zona pellucida. Does not have ribonuclease activity (By similarity).</text>
</comment>
<comment type="interaction">
    <interactant intactId="EBI-12423312">
        <id>Q5GAN6</id>
    </interactant>
    <interactant intactId="EBI-10229433">
        <id>Q13515</id>
        <label>BFSP2</label>
    </interactant>
    <organismsDiffer>false</organismsDiffer>
    <experiments>3</experiments>
</comment>
<comment type="interaction">
    <interactant intactId="EBI-12423312">
        <id>Q5GAN6</id>
    </interactant>
    <interactant intactId="EBI-6942903">
        <id>Q96BA8</id>
        <label>CREB3L1</label>
    </interactant>
    <organismsDiffer>false</organismsDiffer>
    <experiments>3</experiments>
</comment>
<comment type="interaction">
    <interactant intactId="EBI-12423312">
        <id>Q5GAN6</id>
    </interactant>
    <interactant intactId="EBI-5454865">
        <id>Q6IN84</id>
        <label>MRM1</label>
    </interactant>
    <organismsDiffer>false</organismsDiffer>
    <experiments>3</experiments>
</comment>
<comment type="interaction">
    <interactant intactId="EBI-12423312">
        <id>Q5GAN6</id>
    </interactant>
    <interactant intactId="EBI-1046170">
        <id>O95470</id>
        <label>SGPL1</label>
    </interactant>
    <organismsDiffer>false</organismsDiffer>
    <experiments>3</experiments>
</comment>
<comment type="interaction">
    <interactant intactId="EBI-12423312">
        <id>Q5GAN6</id>
    </interactant>
    <interactant intactId="EBI-347996">
        <id>O43765</id>
        <label>SGTA</label>
    </interactant>
    <organismsDiffer>false</organismsDiffer>
    <experiments>5</experiments>
</comment>
<comment type="interaction">
    <interactant intactId="EBI-12423312">
        <id>Q5GAN6</id>
    </interactant>
    <interactant intactId="EBI-744081">
        <id>Q96EQ0</id>
        <label>SGTB</label>
    </interactant>
    <organismsDiffer>false</organismsDiffer>
    <experiments>3</experiments>
</comment>
<comment type="subcellular location">
    <subcellularLocation>
        <location evidence="1">Secreted</location>
    </subcellularLocation>
</comment>
<comment type="alternative products">
    <event type="alternative splicing"/>
    <isoform>
        <id>Q5GAN6-1</id>
        <name>1</name>
        <sequence type="displayed"/>
    </isoform>
    <isoform>
        <id>Q5GAN6-2</id>
        <name>2</name>
        <sequence type="described" ref="VSP_053579"/>
    </isoform>
</comment>
<comment type="PTM">
    <text evidence="1">The N-terminus is blocked. Glycosylated (By similarity).</text>
</comment>
<comment type="similarity">
    <text evidence="5">Belongs to the pancreatic ribonuclease family.</text>
</comment>
<organism>
    <name type="scientific">Homo sapiens</name>
    <name type="common">Human</name>
    <dbReference type="NCBI Taxonomy" id="9606"/>
    <lineage>
        <taxon>Eukaryota</taxon>
        <taxon>Metazoa</taxon>
        <taxon>Chordata</taxon>
        <taxon>Craniata</taxon>
        <taxon>Vertebrata</taxon>
        <taxon>Euteleostomi</taxon>
        <taxon>Mammalia</taxon>
        <taxon>Eutheria</taxon>
        <taxon>Euarchontoglires</taxon>
        <taxon>Primates</taxon>
        <taxon>Haplorrhini</taxon>
        <taxon>Catarrhini</taxon>
        <taxon>Hominidae</taxon>
        <taxon>Homo</taxon>
    </lineage>
</organism>
<name>RNS10_HUMAN</name>
<keyword id="KW-0025">Alternative splicing</keyword>
<keyword id="KW-0130">Cell adhesion</keyword>
<keyword id="KW-0278">Fertilization</keyword>
<keyword id="KW-0325">Glycoprotein</keyword>
<keyword id="KW-1267">Proteomics identification</keyword>
<keyword id="KW-1185">Reference proteome</keyword>
<keyword id="KW-0964">Secreted</keyword>
<keyword id="KW-0732">Signal</keyword>
<dbReference type="EMBL" id="AY665805">
    <property type="protein sequence ID" value="AAV87183.1"/>
    <property type="molecule type" value="mRNA"/>
</dbReference>
<dbReference type="EMBL" id="AK296766">
    <property type="protein sequence ID" value="BAG59346.1"/>
    <property type="molecule type" value="mRNA"/>
</dbReference>
<dbReference type="EMBL" id="AL355075">
    <property type="status" value="NOT_ANNOTATED_CDS"/>
    <property type="molecule type" value="Genomic_DNA"/>
</dbReference>
<dbReference type="EMBL" id="CH471078">
    <property type="protein sequence ID" value="EAW66457.1"/>
    <property type="molecule type" value="Genomic_DNA"/>
</dbReference>
<dbReference type="EMBL" id="BC133002">
    <property type="protein sequence ID" value="AAI33003.1"/>
    <property type="molecule type" value="mRNA"/>
</dbReference>
<dbReference type="EMBL" id="BC133028">
    <property type="protein sequence ID" value="AAI33029.1"/>
    <property type="molecule type" value="mRNA"/>
</dbReference>
<dbReference type="CCDS" id="CCDS32035.1">
    <molecule id="Q5GAN6-1"/>
</dbReference>
<dbReference type="RefSeq" id="NP_001012993.1">
    <molecule id="Q5GAN6-1"/>
    <property type="nucleotide sequence ID" value="NM_001012975.3"/>
</dbReference>
<dbReference type="RefSeq" id="NP_001373135.2">
    <molecule id="Q5GAN6-1"/>
    <property type="nucleotide sequence ID" value="NM_001386206.3"/>
</dbReference>
<dbReference type="SMR" id="Q5GAN6"/>
<dbReference type="BioGRID" id="130810">
    <property type="interactions" value="10"/>
</dbReference>
<dbReference type="FunCoup" id="Q5GAN6">
    <property type="interactions" value="15"/>
</dbReference>
<dbReference type="IntAct" id="Q5GAN6">
    <property type="interactions" value="8"/>
</dbReference>
<dbReference type="STRING" id="9606.ENSP00000333358"/>
<dbReference type="BioMuta" id="RNASE10"/>
<dbReference type="DMDM" id="74741482"/>
<dbReference type="jPOST" id="Q5GAN6"/>
<dbReference type="MassIVE" id="Q5GAN6"/>
<dbReference type="PaxDb" id="9606-ENSP00000333358"/>
<dbReference type="PeptideAtlas" id="Q5GAN6"/>
<dbReference type="Antibodypedia" id="22048">
    <property type="antibodies" value="25 antibodies from 8 providers"/>
</dbReference>
<dbReference type="DNASU" id="338879"/>
<dbReference type="Ensembl" id="ENST00000328444.6">
    <molecule id="Q5GAN6-1"/>
    <property type="protein sequence ID" value="ENSP00000333358.5"/>
    <property type="gene ID" value="ENSG00000182545.7"/>
</dbReference>
<dbReference type="Ensembl" id="ENST00000430083.2">
    <molecule id="Q5GAN6-1"/>
    <property type="protein sequence ID" value="ENSP00000392996.2"/>
    <property type="gene ID" value="ENSG00000182545.7"/>
</dbReference>
<dbReference type="Ensembl" id="ENST00000708851.1">
    <molecule id="Q5GAN6-1"/>
    <property type="protein sequence ID" value="ENSP00000517382.1"/>
    <property type="gene ID" value="ENSG00000291813.1"/>
</dbReference>
<dbReference type="Ensembl" id="ENST00000708852.1">
    <molecule id="Q5GAN6-1"/>
    <property type="protein sequence ID" value="ENSP00000517383.1"/>
    <property type="gene ID" value="ENSG00000291813.1"/>
</dbReference>
<dbReference type="GeneID" id="338879"/>
<dbReference type="KEGG" id="hsa:338879"/>
<dbReference type="MANE-Select" id="ENST00000430083.2">
    <property type="protein sequence ID" value="ENSP00000392996.2"/>
    <property type="RefSeq nucleotide sequence ID" value="NM_001386206.3"/>
    <property type="RefSeq protein sequence ID" value="NP_001373135.2"/>
</dbReference>
<dbReference type="UCSC" id="uc001vxp.2">
    <molecule id="Q5GAN6-1"/>
    <property type="organism name" value="human"/>
</dbReference>
<dbReference type="AGR" id="HGNC:19275"/>
<dbReference type="CTD" id="338879"/>
<dbReference type="GeneCards" id="RNASE10"/>
<dbReference type="HGNC" id="HGNC:19275">
    <property type="gene designation" value="RNASE10"/>
</dbReference>
<dbReference type="HPA" id="ENSG00000182545">
    <property type="expression patterns" value="Not detected"/>
</dbReference>
<dbReference type="MIM" id="621046">
    <property type="type" value="gene"/>
</dbReference>
<dbReference type="neXtProt" id="NX_Q5GAN6"/>
<dbReference type="OpenTargets" id="ENSG00000182545"/>
<dbReference type="PharmGKB" id="PA134878150"/>
<dbReference type="VEuPathDB" id="HostDB:ENSG00000182545"/>
<dbReference type="eggNOG" id="ENOG502RPGF">
    <property type="taxonomic scope" value="Eukaryota"/>
</dbReference>
<dbReference type="GeneTree" id="ENSGT00730000111443"/>
<dbReference type="HOGENOM" id="CLU_1280301_0_0_1"/>
<dbReference type="InParanoid" id="Q5GAN6"/>
<dbReference type="PAN-GO" id="Q5GAN6">
    <property type="GO annotations" value="1 GO annotation based on evolutionary models"/>
</dbReference>
<dbReference type="PhylomeDB" id="Q5GAN6"/>
<dbReference type="TreeFam" id="TF337410"/>
<dbReference type="PathwayCommons" id="Q5GAN6"/>
<dbReference type="SignaLink" id="Q5GAN6"/>
<dbReference type="BioGRID-ORCS" id="338879">
    <property type="hits" value="14 hits in 1138 CRISPR screens"/>
</dbReference>
<dbReference type="GenomeRNAi" id="338879"/>
<dbReference type="Pharos" id="Q5GAN6">
    <property type="development level" value="Tdark"/>
</dbReference>
<dbReference type="PRO" id="PR:Q5GAN6"/>
<dbReference type="Proteomes" id="UP000005640">
    <property type="component" value="Chromosome 14"/>
</dbReference>
<dbReference type="RNAct" id="Q5GAN6">
    <property type="molecule type" value="protein"/>
</dbReference>
<dbReference type="Bgee" id="ENSG00000182545">
    <property type="expression patterns" value="Expressed in primordial germ cell in gonad and 95 other cell types or tissues"/>
</dbReference>
<dbReference type="ExpressionAtlas" id="Q5GAN6">
    <property type="expression patterns" value="baseline and differential"/>
</dbReference>
<dbReference type="GO" id="GO:0005576">
    <property type="term" value="C:extracellular region"/>
    <property type="evidence" value="ECO:0007669"/>
    <property type="project" value="UniProtKB-SubCell"/>
</dbReference>
<dbReference type="GO" id="GO:0003676">
    <property type="term" value="F:nucleic acid binding"/>
    <property type="evidence" value="ECO:0007669"/>
    <property type="project" value="InterPro"/>
</dbReference>
<dbReference type="GO" id="GO:0050830">
    <property type="term" value="P:defense response to Gram-positive bacterium"/>
    <property type="evidence" value="ECO:0000318"/>
    <property type="project" value="GO_Central"/>
</dbReference>
<dbReference type="GO" id="GO:0034113">
    <property type="term" value="P:heterotypic cell-cell adhesion"/>
    <property type="evidence" value="ECO:0000250"/>
    <property type="project" value="UniProtKB"/>
</dbReference>
<dbReference type="GO" id="GO:0022409">
    <property type="term" value="P:positive regulation of cell-cell adhesion"/>
    <property type="evidence" value="ECO:0000250"/>
    <property type="project" value="UniProtKB"/>
</dbReference>
<dbReference type="GO" id="GO:1902093">
    <property type="term" value="P:positive regulation of flagellated sperm motility"/>
    <property type="evidence" value="ECO:0000250"/>
    <property type="project" value="UniProtKB"/>
</dbReference>
<dbReference type="GO" id="GO:0080154">
    <property type="term" value="P:regulation of fertilization"/>
    <property type="evidence" value="ECO:0000250"/>
    <property type="project" value="UniProtKB"/>
</dbReference>
<dbReference type="GO" id="GO:0007338">
    <property type="term" value="P:single fertilization"/>
    <property type="evidence" value="ECO:0007669"/>
    <property type="project" value="UniProtKB-KW"/>
</dbReference>
<dbReference type="CDD" id="cd00163">
    <property type="entry name" value="RNase_A"/>
    <property type="match status" value="1"/>
</dbReference>
<dbReference type="FunFam" id="3.10.130.10:FF:000002">
    <property type="entry name" value="Inactive ribonuclease-like protein 10"/>
    <property type="match status" value="1"/>
</dbReference>
<dbReference type="Gene3D" id="3.10.130.10">
    <property type="entry name" value="Ribonuclease A-like domain"/>
    <property type="match status" value="1"/>
</dbReference>
<dbReference type="InterPro" id="IPR001427">
    <property type="entry name" value="RNaseA"/>
</dbReference>
<dbReference type="InterPro" id="IPR036816">
    <property type="entry name" value="RNaseA-like_dom_sf"/>
</dbReference>
<dbReference type="InterPro" id="IPR023412">
    <property type="entry name" value="RNaseA_domain"/>
</dbReference>
<dbReference type="PANTHER" id="PTHR11437:SF63">
    <property type="entry name" value="INACTIVE RIBONUCLEASE-LIKE PROTEIN 10"/>
    <property type="match status" value="1"/>
</dbReference>
<dbReference type="PANTHER" id="PTHR11437">
    <property type="entry name" value="RIBONUCLEASE"/>
    <property type="match status" value="1"/>
</dbReference>
<dbReference type="Pfam" id="PF00074">
    <property type="entry name" value="RnaseA"/>
    <property type="match status" value="1"/>
</dbReference>
<dbReference type="PRINTS" id="PR00794">
    <property type="entry name" value="RIBONUCLEASE"/>
</dbReference>
<dbReference type="SMART" id="SM00092">
    <property type="entry name" value="RNAse_Pc"/>
    <property type="match status" value="1"/>
</dbReference>
<dbReference type="SUPFAM" id="SSF54076">
    <property type="entry name" value="RNase A-like"/>
    <property type="match status" value="1"/>
</dbReference>
<accession>Q5GAN6</accession>
<accession>A2RUQ3</accession>
<accession>B4DKY4</accession>
<evidence type="ECO:0000250" key="1"/>
<evidence type="ECO:0000255" key="2"/>
<evidence type="ECO:0000256" key="3">
    <source>
        <dbReference type="SAM" id="MobiDB-lite"/>
    </source>
</evidence>
<evidence type="ECO:0000303" key="4">
    <source>
    </source>
</evidence>
<evidence type="ECO:0000305" key="5"/>
<proteinExistence type="evidence at protein level"/>